<organism>
    <name type="scientific">Clostridium beijerinckii (strain ATCC 51743 / NCIMB 8052)</name>
    <name type="common">Clostridium acetobutylicum</name>
    <dbReference type="NCBI Taxonomy" id="290402"/>
    <lineage>
        <taxon>Bacteria</taxon>
        <taxon>Bacillati</taxon>
        <taxon>Bacillota</taxon>
        <taxon>Clostridia</taxon>
        <taxon>Eubacteriales</taxon>
        <taxon>Clostridiaceae</taxon>
        <taxon>Clostridium</taxon>
    </lineage>
</organism>
<feature type="chain" id="PRO_1000080660" description="RNA-binding protein Hfq">
    <location>
        <begin position="1"/>
        <end position="81"/>
    </location>
</feature>
<feature type="domain" description="Sm" evidence="2">
    <location>
        <begin position="11"/>
        <end position="71"/>
    </location>
</feature>
<accession>A6LWI9</accession>
<proteinExistence type="inferred from homology"/>
<name>HFQ_CLOB8</name>
<gene>
    <name evidence="1" type="primary">hfq</name>
    <name type="ordered locus">Cbei_2563</name>
</gene>
<dbReference type="EMBL" id="CP000721">
    <property type="protein sequence ID" value="ABR34719.1"/>
    <property type="molecule type" value="Genomic_DNA"/>
</dbReference>
<dbReference type="RefSeq" id="WP_012058774.1">
    <property type="nucleotide sequence ID" value="NC_009617.1"/>
</dbReference>
<dbReference type="SMR" id="A6LWI9"/>
<dbReference type="GeneID" id="66345491"/>
<dbReference type="KEGG" id="cbe:Cbei_2563"/>
<dbReference type="eggNOG" id="COG1923">
    <property type="taxonomic scope" value="Bacteria"/>
</dbReference>
<dbReference type="HOGENOM" id="CLU_113688_0_2_9"/>
<dbReference type="Proteomes" id="UP000000565">
    <property type="component" value="Chromosome"/>
</dbReference>
<dbReference type="GO" id="GO:0005829">
    <property type="term" value="C:cytosol"/>
    <property type="evidence" value="ECO:0007669"/>
    <property type="project" value="TreeGrafter"/>
</dbReference>
<dbReference type="GO" id="GO:0003723">
    <property type="term" value="F:RNA binding"/>
    <property type="evidence" value="ECO:0007669"/>
    <property type="project" value="UniProtKB-UniRule"/>
</dbReference>
<dbReference type="GO" id="GO:0006355">
    <property type="term" value="P:regulation of DNA-templated transcription"/>
    <property type="evidence" value="ECO:0007669"/>
    <property type="project" value="InterPro"/>
</dbReference>
<dbReference type="GO" id="GO:0043487">
    <property type="term" value="P:regulation of RNA stability"/>
    <property type="evidence" value="ECO:0007669"/>
    <property type="project" value="TreeGrafter"/>
</dbReference>
<dbReference type="GO" id="GO:0045974">
    <property type="term" value="P:regulation of translation, ncRNA-mediated"/>
    <property type="evidence" value="ECO:0007669"/>
    <property type="project" value="TreeGrafter"/>
</dbReference>
<dbReference type="CDD" id="cd01716">
    <property type="entry name" value="Hfq"/>
    <property type="match status" value="1"/>
</dbReference>
<dbReference type="Gene3D" id="2.30.30.100">
    <property type="match status" value="1"/>
</dbReference>
<dbReference type="HAMAP" id="MF_00436">
    <property type="entry name" value="Hfq"/>
    <property type="match status" value="1"/>
</dbReference>
<dbReference type="InterPro" id="IPR005001">
    <property type="entry name" value="Hfq"/>
</dbReference>
<dbReference type="InterPro" id="IPR010920">
    <property type="entry name" value="LSM_dom_sf"/>
</dbReference>
<dbReference type="InterPro" id="IPR047575">
    <property type="entry name" value="Sm"/>
</dbReference>
<dbReference type="NCBIfam" id="TIGR02383">
    <property type="entry name" value="Hfq"/>
    <property type="match status" value="1"/>
</dbReference>
<dbReference type="NCBIfam" id="NF001602">
    <property type="entry name" value="PRK00395.1"/>
    <property type="match status" value="1"/>
</dbReference>
<dbReference type="PANTHER" id="PTHR34772">
    <property type="entry name" value="RNA-BINDING PROTEIN HFQ"/>
    <property type="match status" value="1"/>
</dbReference>
<dbReference type="PANTHER" id="PTHR34772:SF1">
    <property type="entry name" value="RNA-BINDING PROTEIN HFQ"/>
    <property type="match status" value="1"/>
</dbReference>
<dbReference type="Pfam" id="PF17209">
    <property type="entry name" value="Hfq"/>
    <property type="match status" value="1"/>
</dbReference>
<dbReference type="SUPFAM" id="SSF50182">
    <property type="entry name" value="Sm-like ribonucleoproteins"/>
    <property type="match status" value="1"/>
</dbReference>
<dbReference type="PROSITE" id="PS52002">
    <property type="entry name" value="SM"/>
    <property type="match status" value="1"/>
</dbReference>
<evidence type="ECO:0000255" key="1">
    <source>
        <dbReference type="HAMAP-Rule" id="MF_00436"/>
    </source>
</evidence>
<evidence type="ECO:0000255" key="2">
    <source>
        <dbReference type="PROSITE-ProRule" id="PRU01346"/>
    </source>
</evidence>
<comment type="function">
    <text evidence="1">RNA chaperone that binds small regulatory RNA (sRNAs) and mRNAs to facilitate mRNA translational regulation in response to envelope stress, environmental stress and changes in metabolite concentrations. Also binds with high specificity to tRNAs.</text>
</comment>
<comment type="subunit">
    <text evidence="1">Homohexamer.</text>
</comment>
<comment type="similarity">
    <text evidence="1">Belongs to the Hfq family.</text>
</comment>
<keyword id="KW-0694">RNA-binding</keyword>
<keyword id="KW-0346">Stress response</keyword>
<protein>
    <recommendedName>
        <fullName evidence="1">RNA-binding protein Hfq</fullName>
    </recommendedName>
</protein>
<reference key="1">
    <citation type="submission" date="2007-06" db="EMBL/GenBank/DDBJ databases">
        <title>Complete sequence of Clostridium beijerinckii NCIMB 8052.</title>
        <authorList>
            <consortium name="US DOE Joint Genome Institute"/>
            <person name="Copeland A."/>
            <person name="Lucas S."/>
            <person name="Lapidus A."/>
            <person name="Barry K."/>
            <person name="Detter J.C."/>
            <person name="Glavina del Rio T."/>
            <person name="Hammon N."/>
            <person name="Israni S."/>
            <person name="Dalin E."/>
            <person name="Tice H."/>
            <person name="Pitluck S."/>
            <person name="Sims D."/>
            <person name="Brettin T."/>
            <person name="Bruce D."/>
            <person name="Tapia R."/>
            <person name="Brainard J."/>
            <person name="Schmutz J."/>
            <person name="Larimer F."/>
            <person name="Land M."/>
            <person name="Hauser L."/>
            <person name="Kyrpides N."/>
            <person name="Mikhailova N."/>
            <person name="Bennet G."/>
            <person name="Cann I."/>
            <person name="Chen J.-S."/>
            <person name="Contreras A.L."/>
            <person name="Jones D."/>
            <person name="Kashket E."/>
            <person name="Mitchell W."/>
            <person name="Stoddard S."/>
            <person name="Schwarz W."/>
            <person name="Qureshi N."/>
            <person name="Young M."/>
            <person name="Shi Z."/>
            <person name="Ezeji T."/>
            <person name="White B."/>
            <person name="Blaschek H."/>
            <person name="Richardson P."/>
        </authorList>
    </citation>
    <scope>NUCLEOTIDE SEQUENCE [LARGE SCALE GENOMIC DNA]</scope>
    <source>
        <strain>ATCC 51743 / NCIMB 8052</strain>
    </source>
</reference>
<sequence>MVNKQQNNLQDIFLNNARKNKIQIIIHLVNGFQLKGTVKGFDNFTVILDCDNKQMLIYKHAISTITPTKPILFADNEYETT</sequence>